<evidence type="ECO:0000255" key="1">
    <source>
        <dbReference type="HAMAP-Rule" id="MF_00167"/>
    </source>
</evidence>
<keyword id="KW-0010">Activator</keyword>
<keyword id="KW-0963">Cytoplasm</keyword>
<keyword id="KW-0678">Repressor</keyword>
<keyword id="KW-0694">RNA-binding</keyword>
<keyword id="KW-0810">Translation regulation</keyword>
<dbReference type="EMBL" id="CP000627">
    <property type="protein sequence ID" value="ABQ21041.1"/>
    <property type="molecule type" value="Genomic_DNA"/>
</dbReference>
<dbReference type="EMBL" id="CP001235">
    <property type="protein sequence ID" value="ACP08584.1"/>
    <property type="molecule type" value="Genomic_DNA"/>
</dbReference>
<dbReference type="RefSeq" id="WP_000906485.1">
    <property type="nucleotide sequence ID" value="NZ_JAACZH010000029.1"/>
</dbReference>
<dbReference type="SMR" id="A5F9C0"/>
<dbReference type="GeneID" id="94014678"/>
<dbReference type="KEGG" id="vco:VC0395_A0075"/>
<dbReference type="KEGG" id="vcr:VC395_0565"/>
<dbReference type="PATRIC" id="fig|345073.21.peg.554"/>
<dbReference type="eggNOG" id="COG1551">
    <property type="taxonomic scope" value="Bacteria"/>
</dbReference>
<dbReference type="HOGENOM" id="CLU_164837_2_1_6"/>
<dbReference type="OrthoDB" id="9809061at2"/>
<dbReference type="Proteomes" id="UP000000249">
    <property type="component" value="Chromosome 2"/>
</dbReference>
<dbReference type="GO" id="GO:0005829">
    <property type="term" value="C:cytosol"/>
    <property type="evidence" value="ECO:0007669"/>
    <property type="project" value="TreeGrafter"/>
</dbReference>
<dbReference type="GO" id="GO:0048027">
    <property type="term" value="F:mRNA 5'-UTR binding"/>
    <property type="evidence" value="ECO:0007669"/>
    <property type="project" value="UniProtKB-UniRule"/>
</dbReference>
<dbReference type="GO" id="GO:0006402">
    <property type="term" value="P:mRNA catabolic process"/>
    <property type="evidence" value="ECO:0007669"/>
    <property type="project" value="InterPro"/>
</dbReference>
<dbReference type="GO" id="GO:0045947">
    <property type="term" value="P:negative regulation of translational initiation"/>
    <property type="evidence" value="ECO:0007669"/>
    <property type="project" value="UniProtKB-UniRule"/>
</dbReference>
<dbReference type="GO" id="GO:0045948">
    <property type="term" value="P:positive regulation of translational initiation"/>
    <property type="evidence" value="ECO:0007669"/>
    <property type="project" value="UniProtKB-UniRule"/>
</dbReference>
<dbReference type="GO" id="GO:0006109">
    <property type="term" value="P:regulation of carbohydrate metabolic process"/>
    <property type="evidence" value="ECO:0007669"/>
    <property type="project" value="UniProtKB-UniRule"/>
</dbReference>
<dbReference type="FunFam" id="2.60.40.4380:FF:000001">
    <property type="entry name" value="Translational regulator CsrA"/>
    <property type="match status" value="1"/>
</dbReference>
<dbReference type="Gene3D" id="2.60.40.4380">
    <property type="entry name" value="Translational regulator CsrA"/>
    <property type="match status" value="1"/>
</dbReference>
<dbReference type="HAMAP" id="MF_00167">
    <property type="entry name" value="CsrA"/>
    <property type="match status" value="1"/>
</dbReference>
<dbReference type="InterPro" id="IPR003751">
    <property type="entry name" value="CsrA"/>
</dbReference>
<dbReference type="InterPro" id="IPR036107">
    <property type="entry name" value="CsrA_sf"/>
</dbReference>
<dbReference type="NCBIfam" id="TIGR00202">
    <property type="entry name" value="csrA"/>
    <property type="match status" value="1"/>
</dbReference>
<dbReference type="NCBIfam" id="NF002469">
    <property type="entry name" value="PRK01712.1"/>
    <property type="match status" value="1"/>
</dbReference>
<dbReference type="PANTHER" id="PTHR34984">
    <property type="entry name" value="CARBON STORAGE REGULATOR"/>
    <property type="match status" value="1"/>
</dbReference>
<dbReference type="PANTHER" id="PTHR34984:SF1">
    <property type="entry name" value="CARBON STORAGE REGULATOR"/>
    <property type="match status" value="1"/>
</dbReference>
<dbReference type="Pfam" id="PF02599">
    <property type="entry name" value="CsrA"/>
    <property type="match status" value="1"/>
</dbReference>
<dbReference type="SUPFAM" id="SSF117130">
    <property type="entry name" value="CsrA-like"/>
    <property type="match status" value="1"/>
</dbReference>
<organism>
    <name type="scientific">Vibrio cholerae serotype O1 (strain ATCC 39541 / Classical Ogawa 395 / O395)</name>
    <dbReference type="NCBI Taxonomy" id="345073"/>
    <lineage>
        <taxon>Bacteria</taxon>
        <taxon>Pseudomonadati</taxon>
        <taxon>Pseudomonadota</taxon>
        <taxon>Gammaproteobacteria</taxon>
        <taxon>Vibrionales</taxon>
        <taxon>Vibrionaceae</taxon>
        <taxon>Vibrio</taxon>
    </lineage>
</organism>
<sequence length="65" mass="7055">MLILTRRVGETLMIGDEVTVTVLGVKGNQVRIGVNAPKEVSVHREEIYMRIQAEKGNGGVASGNY</sequence>
<accession>A5F9C0</accession>
<accession>C3LX74</accession>
<name>CSRA_VIBC3</name>
<proteinExistence type="inferred from homology"/>
<gene>
    <name evidence="1" type="primary">csrA</name>
    <name type="ordered locus">VC0395_A0075</name>
    <name type="ordered locus">VC395_0565</name>
</gene>
<feature type="chain" id="PRO_1000071571" description="Translational regulator CsrA">
    <location>
        <begin position="1"/>
        <end position="65"/>
    </location>
</feature>
<protein>
    <recommendedName>
        <fullName evidence="1">Translational regulator CsrA</fullName>
    </recommendedName>
    <alternativeName>
        <fullName evidence="1">Carbon storage regulator</fullName>
    </alternativeName>
</protein>
<reference key="1">
    <citation type="submission" date="2007-03" db="EMBL/GenBank/DDBJ databases">
        <authorList>
            <person name="Heidelberg J."/>
        </authorList>
    </citation>
    <scope>NUCLEOTIDE SEQUENCE [LARGE SCALE GENOMIC DNA]</scope>
    <source>
        <strain>ATCC 39541 / Classical Ogawa 395 / O395</strain>
    </source>
</reference>
<reference key="2">
    <citation type="journal article" date="2008" name="PLoS ONE">
        <title>A recalibrated molecular clock and independent origins for the cholera pandemic clones.</title>
        <authorList>
            <person name="Feng L."/>
            <person name="Reeves P.R."/>
            <person name="Lan R."/>
            <person name="Ren Y."/>
            <person name="Gao C."/>
            <person name="Zhou Z."/>
            <person name="Ren Y."/>
            <person name="Cheng J."/>
            <person name="Wang W."/>
            <person name="Wang J."/>
            <person name="Qian W."/>
            <person name="Li D."/>
            <person name="Wang L."/>
        </authorList>
    </citation>
    <scope>NUCLEOTIDE SEQUENCE [LARGE SCALE GENOMIC DNA]</scope>
    <source>
        <strain>ATCC 39541 / Classical Ogawa 395 / O395</strain>
    </source>
</reference>
<comment type="function">
    <text evidence="1">A key translational regulator that binds mRNA to regulate translation initiation and/or mRNA stability. Mediates global changes in gene expression, shifting from rapid growth to stress survival by linking envelope stress, the stringent response and the catabolite repression systems. Usually binds in the 5'-UTR; binding at or near the Shine-Dalgarno sequence prevents ribosome-binding, repressing translation, binding elsewhere in the 5'-UTR can activate translation and/or stabilize the mRNA. Its function is antagonized by small RNA(s).</text>
</comment>
<comment type="subunit">
    <text evidence="1">Homodimer; the beta-strands of each monomer intercalate to form a hydrophobic core, while the alpha-helices form wings that extend away from the core.</text>
</comment>
<comment type="subcellular location">
    <subcellularLocation>
        <location evidence="1">Cytoplasm</location>
    </subcellularLocation>
</comment>
<comment type="similarity">
    <text evidence="1">Belongs to the CsrA/RsmA family.</text>
</comment>